<gene>
    <name evidence="1" type="primary">fabH</name>
    <name type="ordered locus">Oant_2519</name>
</gene>
<proteinExistence type="inferred from homology"/>
<comment type="function">
    <text evidence="1">Catalyzes the condensation reaction of fatty acid synthesis by the addition to an acyl acceptor of two carbons from malonyl-ACP. Catalyzes the first condensation reaction which initiates fatty acid synthesis and may therefore play a role in governing the total rate of fatty acid production. Possesses both acetoacetyl-ACP synthase and acetyl transacylase activities. Its substrate specificity determines the biosynthesis of branched-chain and/or straight-chain of fatty acids.</text>
</comment>
<comment type="catalytic activity">
    <reaction evidence="1">
        <text>malonyl-[ACP] + acetyl-CoA + H(+) = 3-oxobutanoyl-[ACP] + CO2 + CoA</text>
        <dbReference type="Rhea" id="RHEA:12080"/>
        <dbReference type="Rhea" id="RHEA-COMP:9623"/>
        <dbReference type="Rhea" id="RHEA-COMP:9625"/>
        <dbReference type="ChEBI" id="CHEBI:15378"/>
        <dbReference type="ChEBI" id="CHEBI:16526"/>
        <dbReference type="ChEBI" id="CHEBI:57287"/>
        <dbReference type="ChEBI" id="CHEBI:57288"/>
        <dbReference type="ChEBI" id="CHEBI:78449"/>
        <dbReference type="ChEBI" id="CHEBI:78450"/>
        <dbReference type="EC" id="2.3.1.180"/>
    </reaction>
</comment>
<comment type="pathway">
    <text evidence="1">Lipid metabolism; fatty acid biosynthesis.</text>
</comment>
<comment type="subunit">
    <text evidence="1">Homodimer.</text>
</comment>
<comment type="subcellular location">
    <subcellularLocation>
        <location evidence="1">Cytoplasm</location>
    </subcellularLocation>
</comment>
<comment type="domain">
    <text evidence="1">The last Arg residue of the ACP-binding site is essential for the weak association between ACP/AcpP and FabH.</text>
</comment>
<comment type="similarity">
    <text evidence="1">Belongs to the thiolase-like superfamily. FabH family.</text>
</comment>
<feature type="chain" id="PRO_1000187884" description="Beta-ketoacyl-[acyl-carrier-protein] synthase III">
    <location>
        <begin position="1"/>
        <end position="323"/>
    </location>
</feature>
<feature type="region of interest" description="ACP-binding" evidence="1">
    <location>
        <begin position="251"/>
        <end position="255"/>
    </location>
</feature>
<feature type="active site" evidence="1">
    <location>
        <position position="113"/>
    </location>
</feature>
<feature type="active site" evidence="1">
    <location>
        <position position="250"/>
    </location>
</feature>
<feature type="active site" evidence="1">
    <location>
        <position position="280"/>
    </location>
</feature>
<dbReference type="EC" id="2.3.1.180" evidence="1"/>
<dbReference type="EMBL" id="CP000758">
    <property type="protein sequence ID" value="ABS15232.1"/>
    <property type="molecule type" value="Genomic_DNA"/>
</dbReference>
<dbReference type="RefSeq" id="WP_010661101.1">
    <property type="nucleotide sequence ID" value="NC_009667.1"/>
</dbReference>
<dbReference type="SMR" id="A6X1X8"/>
<dbReference type="STRING" id="439375.Oant_2519"/>
<dbReference type="KEGG" id="oan:Oant_2519"/>
<dbReference type="eggNOG" id="COG0332">
    <property type="taxonomic scope" value="Bacteria"/>
</dbReference>
<dbReference type="HOGENOM" id="CLU_039592_3_1_5"/>
<dbReference type="PhylomeDB" id="A6X1X8"/>
<dbReference type="UniPathway" id="UPA00094"/>
<dbReference type="Proteomes" id="UP000002301">
    <property type="component" value="Chromosome 1"/>
</dbReference>
<dbReference type="GO" id="GO:0005737">
    <property type="term" value="C:cytoplasm"/>
    <property type="evidence" value="ECO:0007669"/>
    <property type="project" value="UniProtKB-SubCell"/>
</dbReference>
<dbReference type="GO" id="GO:0004315">
    <property type="term" value="F:3-oxoacyl-[acyl-carrier-protein] synthase activity"/>
    <property type="evidence" value="ECO:0007669"/>
    <property type="project" value="InterPro"/>
</dbReference>
<dbReference type="GO" id="GO:0033818">
    <property type="term" value="F:beta-ketoacyl-acyl-carrier-protein synthase III activity"/>
    <property type="evidence" value="ECO:0007669"/>
    <property type="project" value="UniProtKB-UniRule"/>
</dbReference>
<dbReference type="GO" id="GO:0006633">
    <property type="term" value="P:fatty acid biosynthetic process"/>
    <property type="evidence" value="ECO:0007669"/>
    <property type="project" value="UniProtKB-UniRule"/>
</dbReference>
<dbReference type="CDD" id="cd00830">
    <property type="entry name" value="KAS_III"/>
    <property type="match status" value="1"/>
</dbReference>
<dbReference type="FunFam" id="3.40.47.10:FF:000004">
    <property type="entry name" value="3-oxoacyl-[acyl-carrier-protein] synthase 3"/>
    <property type="match status" value="1"/>
</dbReference>
<dbReference type="Gene3D" id="3.40.47.10">
    <property type="match status" value="1"/>
</dbReference>
<dbReference type="HAMAP" id="MF_01815">
    <property type="entry name" value="FabH"/>
    <property type="match status" value="1"/>
</dbReference>
<dbReference type="InterPro" id="IPR013747">
    <property type="entry name" value="ACP_syn_III_C"/>
</dbReference>
<dbReference type="InterPro" id="IPR013751">
    <property type="entry name" value="ACP_syn_III_N"/>
</dbReference>
<dbReference type="InterPro" id="IPR004655">
    <property type="entry name" value="FabH"/>
</dbReference>
<dbReference type="InterPro" id="IPR016039">
    <property type="entry name" value="Thiolase-like"/>
</dbReference>
<dbReference type="NCBIfam" id="TIGR00747">
    <property type="entry name" value="fabH"/>
    <property type="match status" value="1"/>
</dbReference>
<dbReference type="NCBIfam" id="NF006829">
    <property type="entry name" value="PRK09352.1"/>
    <property type="match status" value="1"/>
</dbReference>
<dbReference type="PANTHER" id="PTHR43091">
    <property type="entry name" value="3-OXOACYL-[ACYL-CARRIER-PROTEIN] SYNTHASE"/>
    <property type="match status" value="1"/>
</dbReference>
<dbReference type="PANTHER" id="PTHR43091:SF1">
    <property type="entry name" value="BETA-KETOACYL-[ACYL-CARRIER-PROTEIN] SYNTHASE III, CHLOROPLASTIC"/>
    <property type="match status" value="1"/>
</dbReference>
<dbReference type="Pfam" id="PF08545">
    <property type="entry name" value="ACP_syn_III"/>
    <property type="match status" value="1"/>
</dbReference>
<dbReference type="Pfam" id="PF08541">
    <property type="entry name" value="ACP_syn_III_C"/>
    <property type="match status" value="1"/>
</dbReference>
<dbReference type="SUPFAM" id="SSF53901">
    <property type="entry name" value="Thiolase-like"/>
    <property type="match status" value="1"/>
</dbReference>
<sequence length="323" mass="34530">MIRSVVRGIGSALPKRVMKNTDFEGIIETSDEWIVQRTGIRERHIAGDDETTVSLGTAAARAAIENAGLQPTDIDLVLLATSTPNHTFPASAVEIQRELGITKGFAFDMQAVCSGFIYAITTADLYIRGGMAKRVLVIGAETFSRILDWNDRTTCVLFGDGAGALVLEAAEGNGLTSDRGVLAANLRSDGNHKEKLFVDGGPSTTQTVGHLRMEGREVFKHAVGMITDVIEASFEETGLTAEDIDWFVPHQANKRIIDASAKKLNIAEGKVVITVDRHGNTSAASVPLALATAVADGRIKKGDLVLLEAMGGGFTWGAVLLRW</sequence>
<reference key="1">
    <citation type="journal article" date="2011" name="J. Bacteriol.">
        <title>Genome of Ochrobactrum anthropi ATCC 49188 T, a versatile opportunistic pathogen and symbiont of several eukaryotic hosts.</title>
        <authorList>
            <person name="Chain P.S."/>
            <person name="Lang D.M."/>
            <person name="Comerci D.J."/>
            <person name="Malfatti S.A."/>
            <person name="Vergez L.M."/>
            <person name="Shin M."/>
            <person name="Ugalde R.A."/>
            <person name="Garcia E."/>
            <person name="Tolmasky M.E."/>
        </authorList>
    </citation>
    <scope>NUCLEOTIDE SEQUENCE [LARGE SCALE GENOMIC DNA]</scope>
    <source>
        <strain>ATCC 49188 / DSM 6882 / CCUG 24695 / JCM 21032 / LMG 3331 / NBRC 15819 / NCTC 12168 / Alc 37</strain>
    </source>
</reference>
<accession>A6X1X8</accession>
<evidence type="ECO:0000255" key="1">
    <source>
        <dbReference type="HAMAP-Rule" id="MF_01815"/>
    </source>
</evidence>
<protein>
    <recommendedName>
        <fullName evidence="1">Beta-ketoacyl-[acyl-carrier-protein] synthase III</fullName>
        <shortName evidence="1">Beta-ketoacyl-ACP synthase III</shortName>
        <shortName evidence="1">KAS III</shortName>
        <ecNumber evidence="1">2.3.1.180</ecNumber>
    </recommendedName>
    <alternativeName>
        <fullName evidence="1">3-oxoacyl-[acyl-carrier-protein] synthase 3</fullName>
    </alternativeName>
    <alternativeName>
        <fullName evidence="1">3-oxoacyl-[acyl-carrier-protein] synthase III</fullName>
    </alternativeName>
</protein>
<organism>
    <name type="scientific">Brucella anthropi (strain ATCC 49188 / DSM 6882 / CCUG 24695 / JCM 21032 / LMG 3331 / NBRC 15819 / NCTC 12168 / Alc 37)</name>
    <name type="common">Ochrobactrum anthropi</name>
    <dbReference type="NCBI Taxonomy" id="439375"/>
    <lineage>
        <taxon>Bacteria</taxon>
        <taxon>Pseudomonadati</taxon>
        <taxon>Pseudomonadota</taxon>
        <taxon>Alphaproteobacteria</taxon>
        <taxon>Hyphomicrobiales</taxon>
        <taxon>Brucellaceae</taxon>
        <taxon>Brucella/Ochrobactrum group</taxon>
        <taxon>Brucella</taxon>
    </lineage>
</organism>
<keyword id="KW-0012">Acyltransferase</keyword>
<keyword id="KW-0963">Cytoplasm</keyword>
<keyword id="KW-0275">Fatty acid biosynthesis</keyword>
<keyword id="KW-0276">Fatty acid metabolism</keyword>
<keyword id="KW-0444">Lipid biosynthesis</keyword>
<keyword id="KW-0443">Lipid metabolism</keyword>
<keyword id="KW-0511">Multifunctional enzyme</keyword>
<keyword id="KW-1185">Reference proteome</keyword>
<keyword id="KW-0808">Transferase</keyword>
<name>FABH_BRUA4</name>